<comment type="function">
    <text evidence="1">Catalyzes the ferrous insertion into protoporphyrin IX.</text>
</comment>
<comment type="catalytic activity">
    <reaction evidence="1">
        <text>heme b + 2 H(+) = protoporphyrin IX + Fe(2+)</text>
        <dbReference type="Rhea" id="RHEA:22584"/>
        <dbReference type="ChEBI" id="CHEBI:15378"/>
        <dbReference type="ChEBI" id="CHEBI:29033"/>
        <dbReference type="ChEBI" id="CHEBI:57306"/>
        <dbReference type="ChEBI" id="CHEBI:60344"/>
        <dbReference type="EC" id="4.98.1.1"/>
    </reaction>
</comment>
<comment type="pathway">
    <text evidence="1">Porphyrin-containing compound metabolism; protoheme biosynthesis; protoheme from protoporphyrin-IX: step 1/1.</text>
</comment>
<comment type="subcellular location">
    <subcellularLocation>
        <location evidence="1">Cytoplasm</location>
    </subcellularLocation>
</comment>
<comment type="similarity">
    <text evidence="1">Belongs to the ferrochelatase family.</text>
</comment>
<comment type="sequence caution" evidence="2">
    <conflict type="erroneous initiation">
        <sequence resource="EMBL-CDS" id="AAM39055"/>
    </conflict>
</comment>
<reference key="1">
    <citation type="journal article" date="2002" name="Nature">
        <title>Comparison of the genomes of two Xanthomonas pathogens with differing host specificities.</title>
        <authorList>
            <person name="da Silva A.C.R."/>
            <person name="Ferro J.A."/>
            <person name="Reinach F.C."/>
            <person name="Farah C.S."/>
            <person name="Furlan L.R."/>
            <person name="Quaggio R.B."/>
            <person name="Monteiro-Vitorello C.B."/>
            <person name="Van Sluys M.A."/>
            <person name="Almeida N.F. Jr."/>
            <person name="Alves L.M.C."/>
            <person name="do Amaral A.M."/>
            <person name="Bertolini M.C."/>
            <person name="Camargo L.E.A."/>
            <person name="Camarotte G."/>
            <person name="Cannavan F."/>
            <person name="Cardozo J."/>
            <person name="Chambergo F."/>
            <person name="Ciapina L.P."/>
            <person name="Cicarelli R.M.B."/>
            <person name="Coutinho L.L."/>
            <person name="Cursino-Santos J.R."/>
            <person name="El-Dorry H."/>
            <person name="Faria J.B."/>
            <person name="Ferreira A.J.S."/>
            <person name="Ferreira R.C.C."/>
            <person name="Ferro M.I.T."/>
            <person name="Formighieri E.F."/>
            <person name="Franco M.C."/>
            <person name="Greggio C.C."/>
            <person name="Gruber A."/>
            <person name="Katsuyama A.M."/>
            <person name="Kishi L.T."/>
            <person name="Leite R.P."/>
            <person name="Lemos E.G.M."/>
            <person name="Lemos M.V.F."/>
            <person name="Locali E.C."/>
            <person name="Machado M.A."/>
            <person name="Madeira A.M.B.N."/>
            <person name="Martinez-Rossi N.M."/>
            <person name="Martins E.C."/>
            <person name="Meidanis J."/>
            <person name="Menck C.F.M."/>
            <person name="Miyaki C.Y."/>
            <person name="Moon D.H."/>
            <person name="Moreira L.M."/>
            <person name="Novo M.T.M."/>
            <person name="Okura V.K."/>
            <person name="Oliveira M.C."/>
            <person name="Oliveira V.R."/>
            <person name="Pereira H.A."/>
            <person name="Rossi A."/>
            <person name="Sena J.A.D."/>
            <person name="Silva C."/>
            <person name="de Souza R.F."/>
            <person name="Spinola L.A.F."/>
            <person name="Takita M.A."/>
            <person name="Tamura R.E."/>
            <person name="Teixeira E.C."/>
            <person name="Tezza R.I.D."/>
            <person name="Trindade dos Santos M."/>
            <person name="Truffi D."/>
            <person name="Tsai S.M."/>
            <person name="White F.F."/>
            <person name="Setubal J.C."/>
            <person name="Kitajima J.P."/>
        </authorList>
    </citation>
    <scope>NUCLEOTIDE SEQUENCE [LARGE SCALE GENOMIC DNA]</scope>
    <source>
        <strain>306</strain>
    </source>
</reference>
<evidence type="ECO:0000255" key="1">
    <source>
        <dbReference type="HAMAP-Rule" id="MF_00323"/>
    </source>
</evidence>
<evidence type="ECO:0000305" key="2"/>
<protein>
    <recommendedName>
        <fullName evidence="1">Ferrochelatase</fullName>
        <ecNumber evidence="1">4.98.1.1</ecNumber>
    </recommendedName>
    <alternativeName>
        <fullName evidence="1">Heme synthase</fullName>
    </alternativeName>
    <alternativeName>
        <fullName evidence="1">Protoheme ferro-lyase</fullName>
    </alternativeName>
</protein>
<name>HEMH_XANAC</name>
<accession>Q8PEX0</accession>
<organism>
    <name type="scientific">Xanthomonas axonopodis pv. citri (strain 306)</name>
    <dbReference type="NCBI Taxonomy" id="190486"/>
    <lineage>
        <taxon>Bacteria</taxon>
        <taxon>Pseudomonadati</taxon>
        <taxon>Pseudomonadota</taxon>
        <taxon>Gammaproteobacteria</taxon>
        <taxon>Lysobacterales</taxon>
        <taxon>Lysobacteraceae</taxon>
        <taxon>Xanthomonas</taxon>
    </lineage>
</organism>
<dbReference type="EC" id="4.98.1.1" evidence="1"/>
<dbReference type="EMBL" id="AE008923">
    <property type="protein sequence ID" value="AAM39055.1"/>
    <property type="status" value="ALT_INIT"/>
    <property type="molecule type" value="Genomic_DNA"/>
</dbReference>
<dbReference type="SMR" id="Q8PEX0"/>
<dbReference type="KEGG" id="xac:XAC4220"/>
<dbReference type="eggNOG" id="COG0276">
    <property type="taxonomic scope" value="Bacteria"/>
</dbReference>
<dbReference type="HOGENOM" id="CLU_018884_0_0_6"/>
<dbReference type="UniPathway" id="UPA00252">
    <property type="reaction ID" value="UER00325"/>
</dbReference>
<dbReference type="Proteomes" id="UP000000576">
    <property type="component" value="Chromosome"/>
</dbReference>
<dbReference type="GO" id="GO:0005737">
    <property type="term" value="C:cytoplasm"/>
    <property type="evidence" value="ECO:0007669"/>
    <property type="project" value="UniProtKB-SubCell"/>
</dbReference>
<dbReference type="GO" id="GO:0004325">
    <property type="term" value="F:ferrochelatase activity"/>
    <property type="evidence" value="ECO:0007669"/>
    <property type="project" value="UniProtKB-UniRule"/>
</dbReference>
<dbReference type="GO" id="GO:0046872">
    <property type="term" value="F:metal ion binding"/>
    <property type="evidence" value="ECO:0007669"/>
    <property type="project" value="UniProtKB-KW"/>
</dbReference>
<dbReference type="GO" id="GO:0006783">
    <property type="term" value="P:heme biosynthetic process"/>
    <property type="evidence" value="ECO:0007669"/>
    <property type="project" value="UniProtKB-UniRule"/>
</dbReference>
<dbReference type="CDD" id="cd00419">
    <property type="entry name" value="Ferrochelatase_C"/>
    <property type="match status" value="1"/>
</dbReference>
<dbReference type="CDD" id="cd03411">
    <property type="entry name" value="Ferrochelatase_N"/>
    <property type="match status" value="1"/>
</dbReference>
<dbReference type="FunFam" id="3.40.50.1400:FF:000012">
    <property type="entry name" value="Ferrochelatase"/>
    <property type="match status" value="1"/>
</dbReference>
<dbReference type="Gene3D" id="3.40.50.1400">
    <property type="match status" value="2"/>
</dbReference>
<dbReference type="HAMAP" id="MF_00323">
    <property type="entry name" value="Ferrochelatase"/>
    <property type="match status" value="1"/>
</dbReference>
<dbReference type="InterPro" id="IPR001015">
    <property type="entry name" value="Ferrochelatase"/>
</dbReference>
<dbReference type="InterPro" id="IPR019772">
    <property type="entry name" value="Ferrochelatase_AS"/>
</dbReference>
<dbReference type="InterPro" id="IPR033644">
    <property type="entry name" value="Ferrochelatase_C"/>
</dbReference>
<dbReference type="InterPro" id="IPR033659">
    <property type="entry name" value="Ferrochelatase_N"/>
</dbReference>
<dbReference type="NCBIfam" id="TIGR00109">
    <property type="entry name" value="hemH"/>
    <property type="match status" value="1"/>
</dbReference>
<dbReference type="PANTHER" id="PTHR11108">
    <property type="entry name" value="FERROCHELATASE"/>
    <property type="match status" value="1"/>
</dbReference>
<dbReference type="PANTHER" id="PTHR11108:SF1">
    <property type="entry name" value="FERROCHELATASE, MITOCHONDRIAL"/>
    <property type="match status" value="1"/>
</dbReference>
<dbReference type="Pfam" id="PF00762">
    <property type="entry name" value="Ferrochelatase"/>
    <property type="match status" value="1"/>
</dbReference>
<dbReference type="SUPFAM" id="SSF53800">
    <property type="entry name" value="Chelatase"/>
    <property type="match status" value="1"/>
</dbReference>
<dbReference type="PROSITE" id="PS00534">
    <property type="entry name" value="FERROCHELATASE"/>
    <property type="match status" value="1"/>
</dbReference>
<proteinExistence type="inferred from homology"/>
<keyword id="KW-0963">Cytoplasm</keyword>
<keyword id="KW-0350">Heme biosynthesis</keyword>
<keyword id="KW-0408">Iron</keyword>
<keyword id="KW-0456">Lyase</keyword>
<keyword id="KW-0479">Metal-binding</keyword>
<keyword id="KW-0627">Porphyrin biosynthesis</keyword>
<gene>
    <name evidence="1" type="primary">hemH</name>
    <name type="ordered locus">XAC4220</name>
</gene>
<feature type="chain" id="PRO_0000175229" description="Ferrochelatase">
    <location>
        <begin position="1"/>
        <end position="318"/>
    </location>
</feature>
<feature type="binding site" evidence="1">
    <location>
        <position position="194"/>
    </location>
    <ligand>
        <name>Fe cation</name>
        <dbReference type="ChEBI" id="CHEBI:24875"/>
    </ligand>
</feature>
<feature type="binding site" evidence="1">
    <location>
        <position position="275"/>
    </location>
    <ligand>
        <name>Fe cation</name>
        <dbReference type="ChEBI" id="CHEBI:24875"/>
    </ligand>
</feature>
<sequence length="318" mass="35191">MNTTPDTALLVVNLGTPESPTAPAVRRYLAEFLSDRRVVAIPPLFWKPLLYGVILPIRGPKSAEKYAKVWLPEGSPLAVYTRRLAGGLQAVMPDWHVEWAMRYGEPALRKTLDRLRARGIKRIVVLPLYPQYSTTTTASIQDVVDAWRTSAPEIAVEVIQDYCEDTGWVAAIAESIRAHWQVHGRSEKLMFSFHGLPQRVADAGDPYPQQCERSAQAIVAALGLGADEWQMGYQSRFGAERWLQPYAEPTLWKLAEGGVRSFDLVCPGFATDCLETLEEVALGFSETLAERGATLSYIPCLNASDAHAHALAAMARRA</sequence>